<dbReference type="EMBL" id="L09755">
    <property type="protein sequence ID" value="AAA32862.1"/>
    <property type="molecule type" value="mRNA"/>
</dbReference>
<dbReference type="EMBL" id="AB008266">
    <property type="protein sequence ID" value="BAB10282.1"/>
    <property type="molecule type" value="Genomic_DNA"/>
</dbReference>
<dbReference type="EMBL" id="CP002688">
    <property type="protein sequence ID" value="AED97846.1"/>
    <property type="molecule type" value="Genomic_DNA"/>
</dbReference>
<dbReference type="EMBL" id="AY059859">
    <property type="protein sequence ID" value="AAL24341.1"/>
    <property type="molecule type" value="mRNA"/>
</dbReference>
<dbReference type="EMBL" id="AY081679">
    <property type="protein sequence ID" value="AAM10241.1"/>
    <property type="molecule type" value="mRNA"/>
</dbReference>
<dbReference type="EMBL" id="AY087546">
    <property type="protein sequence ID" value="AAM65088.1"/>
    <property type="molecule type" value="mRNA"/>
</dbReference>
<dbReference type="RefSeq" id="NP_201219.1">
    <property type="nucleotide sequence ID" value="NM_125810.3"/>
</dbReference>
<dbReference type="SMR" id="P34789"/>
<dbReference type="BioGRID" id="21777">
    <property type="interactions" value="1"/>
</dbReference>
<dbReference type="FunCoup" id="P34789">
    <property type="interactions" value="2632"/>
</dbReference>
<dbReference type="STRING" id="3702.P34789"/>
<dbReference type="iPTMnet" id="P34789"/>
<dbReference type="PaxDb" id="3702-AT5G64140.1"/>
<dbReference type="ProteomicsDB" id="237023"/>
<dbReference type="EnsemblPlants" id="AT5G64140.1">
    <property type="protein sequence ID" value="AT5G64140.1"/>
    <property type="gene ID" value="AT5G64140"/>
</dbReference>
<dbReference type="GeneID" id="836535"/>
<dbReference type="Gramene" id="AT5G64140.1">
    <property type="protein sequence ID" value="AT5G64140.1"/>
    <property type="gene ID" value="AT5G64140"/>
</dbReference>
<dbReference type="KEGG" id="ath:AT5G64140"/>
<dbReference type="Araport" id="AT5G64140"/>
<dbReference type="TAIR" id="AT5G64140">
    <property type="gene designation" value="RPS28"/>
</dbReference>
<dbReference type="eggNOG" id="KOG3502">
    <property type="taxonomic scope" value="Eukaryota"/>
</dbReference>
<dbReference type="HOGENOM" id="CLU_178987_1_0_1"/>
<dbReference type="InParanoid" id="P34789"/>
<dbReference type="OMA" id="DKPQYAR"/>
<dbReference type="OrthoDB" id="1642935at2759"/>
<dbReference type="PhylomeDB" id="P34789"/>
<dbReference type="PRO" id="PR:P34789"/>
<dbReference type="Proteomes" id="UP000006548">
    <property type="component" value="Chromosome 5"/>
</dbReference>
<dbReference type="ExpressionAtlas" id="P34789">
    <property type="expression patterns" value="baseline and differential"/>
</dbReference>
<dbReference type="GO" id="GO:0022626">
    <property type="term" value="C:cytosolic ribosome"/>
    <property type="evidence" value="ECO:0007005"/>
    <property type="project" value="TAIR"/>
</dbReference>
<dbReference type="GO" id="GO:0022627">
    <property type="term" value="C:cytosolic small ribosomal subunit"/>
    <property type="evidence" value="ECO:0007005"/>
    <property type="project" value="TAIR"/>
</dbReference>
<dbReference type="GO" id="GO:0009536">
    <property type="term" value="C:plastid"/>
    <property type="evidence" value="ECO:0007005"/>
    <property type="project" value="TAIR"/>
</dbReference>
<dbReference type="GO" id="GO:0003729">
    <property type="term" value="F:mRNA binding"/>
    <property type="evidence" value="ECO:0000314"/>
    <property type="project" value="TAIR"/>
</dbReference>
<dbReference type="GO" id="GO:0003735">
    <property type="term" value="F:structural constituent of ribosome"/>
    <property type="evidence" value="ECO:0000314"/>
    <property type="project" value="CAFA"/>
</dbReference>
<dbReference type="GO" id="GO:0006412">
    <property type="term" value="P:translation"/>
    <property type="evidence" value="ECO:0007669"/>
    <property type="project" value="InterPro"/>
</dbReference>
<dbReference type="CDD" id="cd04457">
    <property type="entry name" value="S1_S28E"/>
    <property type="match status" value="1"/>
</dbReference>
<dbReference type="FunFam" id="2.40.50.140:FF:000025">
    <property type="entry name" value="40S ribosomal protein S28"/>
    <property type="match status" value="1"/>
</dbReference>
<dbReference type="Gene3D" id="2.40.50.140">
    <property type="entry name" value="Nucleic acid-binding proteins"/>
    <property type="match status" value="1"/>
</dbReference>
<dbReference type="HAMAP" id="MF_00292">
    <property type="entry name" value="Ribosomal_eS28"/>
    <property type="match status" value="1"/>
</dbReference>
<dbReference type="InterPro" id="IPR012340">
    <property type="entry name" value="NA-bd_OB-fold"/>
</dbReference>
<dbReference type="InterPro" id="IPR000289">
    <property type="entry name" value="Ribosomal_eS28"/>
</dbReference>
<dbReference type="InterPro" id="IPR028626">
    <property type="entry name" value="Ribosomal_eS28_CS"/>
</dbReference>
<dbReference type="PANTHER" id="PTHR10769">
    <property type="entry name" value="40S RIBOSOMAL PROTEIN S28"/>
    <property type="match status" value="1"/>
</dbReference>
<dbReference type="PANTHER" id="PTHR10769:SF3">
    <property type="entry name" value="SMALL RIBOSOMAL SUBUNIT PROTEIN ES28"/>
    <property type="match status" value="1"/>
</dbReference>
<dbReference type="Pfam" id="PF01200">
    <property type="entry name" value="Ribosomal_S28e"/>
    <property type="match status" value="1"/>
</dbReference>
<dbReference type="SUPFAM" id="SSF50249">
    <property type="entry name" value="Nucleic acid-binding proteins"/>
    <property type="match status" value="1"/>
</dbReference>
<dbReference type="PROSITE" id="PS00961">
    <property type="entry name" value="RIBOSOMAL_S28E"/>
    <property type="match status" value="1"/>
</dbReference>
<protein>
    <recommendedName>
        <fullName evidence="1">Small ribosomal subunit protein eS28x</fullName>
    </recommendedName>
    <alternativeName>
        <fullName>40S ribosomal protein S28-2</fullName>
    </alternativeName>
</protein>
<keyword id="KW-0963">Cytoplasm</keyword>
<keyword id="KW-1185">Reference proteome</keyword>
<keyword id="KW-0687">Ribonucleoprotein</keyword>
<keyword id="KW-0689">Ribosomal protein</keyword>
<sequence>MDSQIKHAVVVKVMGRTGSRGQVTQVRVKFTDSDRFIMRNVKGPVREGDVLTLLESEREARRLR</sequence>
<comment type="subcellular location">
    <subcellularLocation>
        <location>Cytoplasm</location>
    </subcellularLocation>
</comment>
<comment type="similarity">
    <text evidence="2">Belongs to the eukaryotic ribosomal protein eS28 family.</text>
</comment>
<gene>
    <name type="primary">RPS28C</name>
    <name type="ordered locus">At5g64140</name>
    <name type="ORF">MHJ24.12</name>
</gene>
<accession>P34789</accession>
<organism>
    <name type="scientific">Arabidopsis thaliana</name>
    <name type="common">Mouse-ear cress</name>
    <dbReference type="NCBI Taxonomy" id="3702"/>
    <lineage>
        <taxon>Eukaryota</taxon>
        <taxon>Viridiplantae</taxon>
        <taxon>Streptophyta</taxon>
        <taxon>Embryophyta</taxon>
        <taxon>Tracheophyta</taxon>
        <taxon>Spermatophyta</taxon>
        <taxon>Magnoliopsida</taxon>
        <taxon>eudicotyledons</taxon>
        <taxon>Gunneridae</taxon>
        <taxon>Pentapetalae</taxon>
        <taxon>rosids</taxon>
        <taxon>malvids</taxon>
        <taxon>Brassicales</taxon>
        <taxon>Brassicaceae</taxon>
        <taxon>Camelineae</taxon>
        <taxon>Arabidopsis</taxon>
    </lineage>
</organism>
<name>RS282_ARATH</name>
<evidence type="ECO:0000303" key="1">
    <source>
    </source>
</evidence>
<evidence type="ECO:0000305" key="2"/>
<proteinExistence type="inferred from homology"/>
<feature type="chain" id="PRO_0000136834" description="Small ribosomal subunit protein eS28x">
    <location>
        <begin position="1"/>
        <end position="64"/>
    </location>
</feature>
<reference key="1">
    <citation type="journal article" date="1993" name="Plant Physiol.">
        <title>Cloning of an Arabidopsis ribosomal protein S28 cDNA.</title>
        <authorList>
            <person name="Hwang I."/>
            <person name="Goodman H.M."/>
        </authorList>
    </citation>
    <scope>NUCLEOTIDE SEQUENCE [MRNA]</scope>
</reference>
<reference key="2">
    <citation type="journal article" date="1997" name="DNA Res.">
        <title>Structural analysis of Arabidopsis thaliana chromosome 5. III. Sequence features of the regions of 1,191,918 bp covered by seventeen physically assigned P1 clones.</title>
        <authorList>
            <person name="Nakamura Y."/>
            <person name="Sato S."/>
            <person name="Kaneko T."/>
            <person name="Kotani H."/>
            <person name="Asamizu E."/>
            <person name="Miyajima N."/>
            <person name="Tabata S."/>
        </authorList>
    </citation>
    <scope>NUCLEOTIDE SEQUENCE [LARGE SCALE GENOMIC DNA]</scope>
    <source>
        <strain>cv. Columbia</strain>
    </source>
</reference>
<reference key="3">
    <citation type="journal article" date="2017" name="Plant J.">
        <title>Araport11: a complete reannotation of the Arabidopsis thaliana reference genome.</title>
        <authorList>
            <person name="Cheng C.Y."/>
            <person name="Krishnakumar V."/>
            <person name="Chan A.P."/>
            <person name="Thibaud-Nissen F."/>
            <person name="Schobel S."/>
            <person name="Town C.D."/>
        </authorList>
    </citation>
    <scope>GENOME REANNOTATION</scope>
    <source>
        <strain>cv. Columbia</strain>
    </source>
</reference>
<reference key="4">
    <citation type="journal article" date="2003" name="Science">
        <title>Empirical analysis of transcriptional activity in the Arabidopsis genome.</title>
        <authorList>
            <person name="Yamada K."/>
            <person name="Lim J."/>
            <person name="Dale J.M."/>
            <person name="Chen H."/>
            <person name="Shinn P."/>
            <person name="Palm C.J."/>
            <person name="Southwick A.M."/>
            <person name="Wu H.C."/>
            <person name="Kim C.J."/>
            <person name="Nguyen M."/>
            <person name="Pham P.K."/>
            <person name="Cheuk R.F."/>
            <person name="Karlin-Newmann G."/>
            <person name="Liu S.X."/>
            <person name="Lam B."/>
            <person name="Sakano H."/>
            <person name="Wu T."/>
            <person name="Yu G."/>
            <person name="Miranda M."/>
            <person name="Quach H.L."/>
            <person name="Tripp M."/>
            <person name="Chang C.H."/>
            <person name="Lee J.M."/>
            <person name="Toriumi M.J."/>
            <person name="Chan M.M."/>
            <person name="Tang C.C."/>
            <person name="Onodera C.S."/>
            <person name="Deng J.M."/>
            <person name="Akiyama K."/>
            <person name="Ansari Y."/>
            <person name="Arakawa T."/>
            <person name="Banh J."/>
            <person name="Banno F."/>
            <person name="Bowser L."/>
            <person name="Brooks S.Y."/>
            <person name="Carninci P."/>
            <person name="Chao Q."/>
            <person name="Choy N."/>
            <person name="Enju A."/>
            <person name="Goldsmith A.D."/>
            <person name="Gurjal M."/>
            <person name="Hansen N.F."/>
            <person name="Hayashizaki Y."/>
            <person name="Johnson-Hopson C."/>
            <person name="Hsuan V.W."/>
            <person name="Iida K."/>
            <person name="Karnes M."/>
            <person name="Khan S."/>
            <person name="Koesema E."/>
            <person name="Ishida J."/>
            <person name="Jiang P.X."/>
            <person name="Jones T."/>
            <person name="Kawai J."/>
            <person name="Kamiya A."/>
            <person name="Meyers C."/>
            <person name="Nakajima M."/>
            <person name="Narusaka M."/>
            <person name="Seki M."/>
            <person name="Sakurai T."/>
            <person name="Satou M."/>
            <person name="Tamse R."/>
            <person name="Vaysberg M."/>
            <person name="Wallender E.K."/>
            <person name="Wong C."/>
            <person name="Yamamura Y."/>
            <person name="Yuan S."/>
            <person name="Shinozaki K."/>
            <person name="Davis R.W."/>
            <person name="Theologis A."/>
            <person name="Ecker J.R."/>
        </authorList>
    </citation>
    <scope>NUCLEOTIDE SEQUENCE [LARGE SCALE MRNA]</scope>
    <source>
        <strain>cv. Columbia</strain>
    </source>
</reference>
<reference key="5">
    <citation type="submission" date="2002-03" db="EMBL/GenBank/DDBJ databases">
        <title>Full-length cDNA from Arabidopsis thaliana.</title>
        <authorList>
            <person name="Brover V.V."/>
            <person name="Troukhan M.E."/>
            <person name="Alexandrov N.A."/>
            <person name="Lu Y.-P."/>
            <person name="Flavell R.B."/>
            <person name="Feldmann K.A."/>
        </authorList>
    </citation>
    <scope>NUCLEOTIDE SEQUENCE [LARGE SCALE MRNA]</scope>
</reference>
<reference key="6">
    <citation type="journal article" date="2001" name="Plant Physiol.">
        <title>The organization of cytoplasmic ribosomal protein genes in the Arabidopsis genome.</title>
        <authorList>
            <person name="Barakat A."/>
            <person name="Szick-Miranda K."/>
            <person name="Chang I.-F."/>
            <person name="Guyot R."/>
            <person name="Blanc G."/>
            <person name="Cooke R."/>
            <person name="Delseny M."/>
            <person name="Bailey-Serres J."/>
        </authorList>
    </citation>
    <scope>GENE FAMILY ORGANIZATION</scope>
    <scope>NOMENCLATURE</scope>
</reference>
<reference key="7">
    <citation type="journal article" date="2023" name="Plant Cell">
        <title>An updated nomenclature for plant ribosomal protein genes.</title>
        <authorList>
            <person name="Scarpin M.R."/>
            <person name="Busche M."/>
            <person name="Martinez R.E."/>
            <person name="Harper L.C."/>
            <person name="Reiser L."/>
            <person name="Szakonyi D."/>
            <person name="Merchante C."/>
            <person name="Lan T."/>
            <person name="Xiong W."/>
            <person name="Mo B."/>
            <person name="Tang G."/>
            <person name="Chen X."/>
            <person name="Bailey-Serres J."/>
            <person name="Browning K.S."/>
            <person name="Brunkard J.O."/>
        </authorList>
    </citation>
    <scope>NOMENCLATURE</scope>
</reference>